<keyword id="KW-0025">Alternative splicing</keyword>
<keyword id="KW-0156">Chromatin regulator</keyword>
<keyword id="KW-0378">Hydrolase</keyword>
<keyword id="KW-0479">Metal-binding</keyword>
<keyword id="KW-0539">Nucleus</keyword>
<keyword id="KW-1185">Reference proteome</keyword>
<keyword id="KW-0678">Repressor</keyword>
<keyword id="KW-0804">Transcription</keyword>
<keyword id="KW-0805">Transcription regulation</keyword>
<keyword id="KW-0862">Zinc</keyword>
<reference key="1">
    <citation type="journal article" date="2003" name="Plant J.">
        <title>Structure and expression of the rice class-I type histone deacetylase genes OsHDAC1-3: OsHDAC1 overexpression in transgenic plants leads to increased growth rate and altered architecture.</title>
        <authorList>
            <person name="Jang I.C."/>
            <person name="Pahk Y.M."/>
            <person name="Song S.I."/>
            <person name="Kwon H.J."/>
            <person name="Nahm B.H."/>
            <person name="Kim J.K."/>
        </authorList>
    </citation>
    <scope>NUCLEOTIDE SEQUENCE [MRNA] (ISOFORM 2)</scope>
    <scope>TISSUE SPECIFICITY</scope>
</reference>
<reference key="2">
    <citation type="journal article" date="2005" name="Nature">
        <title>The map-based sequence of the rice genome.</title>
        <authorList>
            <consortium name="International rice genome sequencing project (IRGSP)"/>
        </authorList>
    </citation>
    <scope>NUCLEOTIDE SEQUENCE [LARGE SCALE GENOMIC DNA]</scope>
    <source>
        <strain>cv. Nipponbare</strain>
    </source>
</reference>
<reference key="3">
    <citation type="journal article" date="2008" name="Nucleic Acids Res.">
        <title>The rice annotation project database (RAP-DB): 2008 update.</title>
        <authorList>
            <consortium name="The rice annotation project (RAP)"/>
        </authorList>
    </citation>
    <scope>GENOME REANNOTATION</scope>
    <source>
        <strain>cv. Nipponbare</strain>
    </source>
</reference>
<reference key="4">
    <citation type="journal article" date="2013" name="Rice">
        <title>Improvement of the Oryza sativa Nipponbare reference genome using next generation sequence and optical map data.</title>
        <authorList>
            <person name="Kawahara Y."/>
            <person name="de la Bastide M."/>
            <person name="Hamilton J.P."/>
            <person name="Kanamori H."/>
            <person name="McCombie W.R."/>
            <person name="Ouyang S."/>
            <person name="Schwartz D.C."/>
            <person name="Tanaka T."/>
            <person name="Wu J."/>
            <person name="Zhou S."/>
            <person name="Childs K.L."/>
            <person name="Davidson R.M."/>
            <person name="Lin H."/>
            <person name="Quesada-Ocampo L."/>
            <person name="Vaillancourt B."/>
            <person name="Sakai H."/>
            <person name="Lee S.S."/>
            <person name="Kim J."/>
            <person name="Numa H."/>
            <person name="Itoh T."/>
            <person name="Buell C.R."/>
            <person name="Matsumoto T."/>
        </authorList>
    </citation>
    <scope>GENOME REANNOTATION</scope>
    <source>
        <strain>cv. Nipponbare</strain>
    </source>
</reference>
<reference key="5">
    <citation type="journal article" date="2005" name="PLoS Biol.">
        <title>The genomes of Oryza sativa: a history of duplications.</title>
        <authorList>
            <person name="Yu J."/>
            <person name="Wang J."/>
            <person name="Lin W."/>
            <person name="Li S."/>
            <person name="Li H."/>
            <person name="Zhou J."/>
            <person name="Ni P."/>
            <person name="Dong W."/>
            <person name="Hu S."/>
            <person name="Zeng C."/>
            <person name="Zhang J."/>
            <person name="Zhang Y."/>
            <person name="Li R."/>
            <person name="Xu Z."/>
            <person name="Li S."/>
            <person name="Li X."/>
            <person name="Zheng H."/>
            <person name="Cong L."/>
            <person name="Lin L."/>
            <person name="Yin J."/>
            <person name="Geng J."/>
            <person name="Li G."/>
            <person name="Shi J."/>
            <person name="Liu J."/>
            <person name="Lv H."/>
            <person name="Li J."/>
            <person name="Wang J."/>
            <person name="Deng Y."/>
            <person name="Ran L."/>
            <person name="Shi X."/>
            <person name="Wang X."/>
            <person name="Wu Q."/>
            <person name="Li C."/>
            <person name="Ren X."/>
            <person name="Wang J."/>
            <person name="Wang X."/>
            <person name="Li D."/>
            <person name="Liu D."/>
            <person name="Zhang X."/>
            <person name="Ji Z."/>
            <person name="Zhao W."/>
            <person name="Sun Y."/>
            <person name="Zhang Z."/>
            <person name="Bao J."/>
            <person name="Han Y."/>
            <person name="Dong L."/>
            <person name="Ji J."/>
            <person name="Chen P."/>
            <person name="Wu S."/>
            <person name="Liu J."/>
            <person name="Xiao Y."/>
            <person name="Bu D."/>
            <person name="Tan J."/>
            <person name="Yang L."/>
            <person name="Ye C."/>
            <person name="Zhang J."/>
            <person name="Xu J."/>
            <person name="Zhou Y."/>
            <person name="Yu Y."/>
            <person name="Zhang B."/>
            <person name="Zhuang S."/>
            <person name="Wei H."/>
            <person name="Liu B."/>
            <person name="Lei M."/>
            <person name="Yu H."/>
            <person name="Li Y."/>
            <person name="Xu H."/>
            <person name="Wei S."/>
            <person name="He X."/>
            <person name="Fang L."/>
            <person name="Zhang Z."/>
            <person name="Zhang Y."/>
            <person name="Huang X."/>
            <person name="Su Z."/>
            <person name="Tong W."/>
            <person name="Li J."/>
            <person name="Tong Z."/>
            <person name="Li S."/>
            <person name="Ye J."/>
            <person name="Wang L."/>
            <person name="Fang L."/>
            <person name="Lei T."/>
            <person name="Chen C.-S."/>
            <person name="Chen H.-C."/>
            <person name="Xu Z."/>
            <person name="Li H."/>
            <person name="Huang H."/>
            <person name="Zhang F."/>
            <person name="Xu H."/>
            <person name="Li N."/>
            <person name="Zhao C."/>
            <person name="Li S."/>
            <person name="Dong L."/>
            <person name="Huang Y."/>
            <person name="Li L."/>
            <person name="Xi Y."/>
            <person name="Qi Q."/>
            <person name="Li W."/>
            <person name="Zhang B."/>
            <person name="Hu W."/>
            <person name="Zhang Y."/>
            <person name="Tian X."/>
            <person name="Jiao Y."/>
            <person name="Liang X."/>
            <person name="Jin J."/>
            <person name="Gao L."/>
            <person name="Zheng W."/>
            <person name="Hao B."/>
            <person name="Liu S.-M."/>
            <person name="Wang W."/>
            <person name="Yuan L."/>
            <person name="Cao M."/>
            <person name="McDermott J."/>
            <person name="Samudrala R."/>
            <person name="Wang J."/>
            <person name="Wong G.K.-S."/>
            <person name="Yang H."/>
        </authorList>
    </citation>
    <scope>NUCLEOTIDE SEQUENCE [LARGE SCALE GENOMIC DNA]</scope>
    <source>
        <strain>cv. Nipponbare</strain>
    </source>
</reference>
<reference key="6">
    <citation type="journal article" date="2003" name="Science">
        <title>Collection, mapping, and annotation of over 28,000 cDNA clones from japonica rice.</title>
        <authorList>
            <consortium name="The rice full-length cDNA consortium"/>
        </authorList>
    </citation>
    <scope>NUCLEOTIDE SEQUENCE [LARGE SCALE MRNA] (ISOFORM 1)</scope>
    <source>
        <strain>cv. Nipponbare</strain>
    </source>
</reference>
<reference key="7">
    <citation type="journal article" date="2009" name="Biochem. Biophys. Res. Commun.">
        <title>Rice histone deacetylase genes display specific expression patterns and developmental functions.</title>
        <authorList>
            <person name="Hu Y."/>
            <person name="Qin F."/>
            <person name="Huang L."/>
            <person name="Sun Q."/>
            <person name="Li C."/>
            <person name="Zhao Y."/>
            <person name="Zhou D.X."/>
        </authorList>
    </citation>
    <scope>INDUCTION</scope>
</reference>
<sequence length="509" mass="56782">MDPSSAGAGGNSLASASCGDAQKRRVCYFYDPEVGNYYYGQGHPMKPHRVRMTHALLAHYGLLAPAKMQVLRPLPARDRDLCRFHSDDYVAFLRAVTPETQFDQIRSLRRFNVGEDCPVFDGLYAYCQTYAGASVGAAVKLNHGTHDIAINWSGGLHHAKKSEASGFCYVNDIVLAILELLKLHERVLYIDIDIHHGDGVEEAFYTTNRVMTVSFHKFGDYFPGTGDIRDIGYSEGKYYCLNVPLDDGIDDDSYQSIFKPIISKVMEMYRPGAVVLQCGADSLSGDRLGCFNLSGKGHAECVKFMRSFNVPLLLLGGGGYTIRNVARCWCYETGVALGEELREKLPYNEYYEYFGPEYSLYVAASNMENRNTNKQLEEIKCNILDNLSKLQHAPSVQFEERIPETKLPEPDEDQDDPDERHDPDSDMLLDDHKPMGHSARSLIHNIGVKREITETETKDQHGKRLTTEHKVPEPMADDLGSSKQVPTADANSMAINAPGNAKNEPGSSL</sequence>
<evidence type="ECO:0000250" key="1">
    <source>
        <dbReference type="UniProtKB" id="O22446"/>
    </source>
</evidence>
<evidence type="ECO:0000250" key="2">
    <source>
        <dbReference type="UniProtKB" id="Q8GXJ1"/>
    </source>
</evidence>
<evidence type="ECO:0000256" key="3">
    <source>
        <dbReference type="SAM" id="MobiDB-lite"/>
    </source>
</evidence>
<evidence type="ECO:0000269" key="4">
    <source>
    </source>
</evidence>
<evidence type="ECO:0000269" key="5">
    <source>
    </source>
</evidence>
<evidence type="ECO:0000303" key="6">
    <source>
    </source>
</evidence>
<evidence type="ECO:0000303" key="7">
    <source>
    </source>
</evidence>
<evidence type="ECO:0000305" key="8"/>
<evidence type="ECO:0000312" key="9">
    <source>
        <dbReference type="EMBL" id="BAD17681.1"/>
    </source>
</evidence>
<evidence type="ECO:0000312" key="10">
    <source>
        <dbReference type="EMBL" id="BAD25051.1"/>
    </source>
</evidence>
<evidence type="ECO:0000312" key="11">
    <source>
        <dbReference type="EMBL" id="BAS77631.1"/>
    </source>
</evidence>
<evidence type="ECO:0000312" key="12">
    <source>
        <dbReference type="EMBL" id="EEE56554.1"/>
    </source>
</evidence>
<organism>
    <name type="scientific">Oryza sativa subsp. japonica</name>
    <name type="common">Rice</name>
    <dbReference type="NCBI Taxonomy" id="39947"/>
    <lineage>
        <taxon>Eukaryota</taxon>
        <taxon>Viridiplantae</taxon>
        <taxon>Streptophyta</taxon>
        <taxon>Embryophyta</taxon>
        <taxon>Tracheophyta</taxon>
        <taxon>Spermatophyta</taxon>
        <taxon>Magnoliopsida</taxon>
        <taxon>Liliopsida</taxon>
        <taxon>Poales</taxon>
        <taxon>Poaceae</taxon>
        <taxon>BOP clade</taxon>
        <taxon>Oryzoideae</taxon>
        <taxon>Oryzeae</taxon>
        <taxon>Oryzinae</taxon>
        <taxon>Oryza</taxon>
        <taxon>Oryza sativa</taxon>
    </lineage>
</organism>
<accession>Q6YV04</accession>
<accession>B9F497</accession>
<accession>Q0E2T7</accession>
<accession>Q7Y0Y7</accession>
<feature type="chain" id="PRO_0000440561" description="Histone deacetylase 2">
    <location>
        <begin position="1"/>
        <end position="509"/>
    </location>
</feature>
<feature type="region of interest" description="Histone deacetylase" evidence="8">
    <location>
        <begin position="24"/>
        <end position="338"/>
    </location>
</feature>
<feature type="region of interest" description="Disordered" evidence="3">
    <location>
        <begin position="394"/>
        <end position="509"/>
    </location>
</feature>
<feature type="compositionally biased region" description="Basic and acidic residues" evidence="3">
    <location>
        <begin position="398"/>
        <end position="409"/>
    </location>
</feature>
<feature type="compositionally biased region" description="Basic and acidic residues" evidence="3">
    <location>
        <begin position="418"/>
        <end position="434"/>
    </location>
</feature>
<feature type="compositionally biased region" description="Basic and acidic residues" evidence="3">
    <location>
        <begin position="448"/>
        <end position="472"/>
    </location>
</feature>
<feature type="compositionally biased region" description="Polar residues" evidence="3">
    <location>
        <begin position="481"/>
        <end position="494"/>
    </location>
</feature>
<feature type="active site" description="Proton donor/acceptor" evidence="2">
    <location>
        <position position="158"/>
    </location>
</feature>
<feature type="binding site" evidence="2">
    <location>
        <position position="193"/>
    </location>
    <ligand>
        <name>Zn(2+)</name>
        <dbReference type="ChEBI" id="CHEBI:29105"/>
    </ligand>
</feature>
<feature type="binding site" evidence="2">
    <location>
        <position position="195"/>
    </location>
    <ligand>
        <name>Zn(2+)</name>
        <dbReference type="ChEBI" id="CHEBI:29105"/>
    </ligand>
</feature>
<feature type="binding site" evidence="2">
    <location>
        <position position="281"/>
    </location>
    <ligand>
        <name>Zn(2+)</name>
        <dbReference type="ChEBI" id="CHEBI:29105"/>
    </ligand>
</feature>
<feature type="site" description="Polarizes the scissile carbonyl of the substrate" evidence="2">
    <location>
        <position position="320"/>
    </location>
</feature>
<feature type="splice variant" id="VSP_058972" description="In isoform 2.">
    <original>TADANSMAINAP</original>
    <variation>VSRRLLYPSANP</variation>
    <location>
        <begin position="487"/>
        <end position="498"/>
    </location>
</feature>
<feature type="splice variant" id="VSP_058973" description="In isoform 2.">
    <location>
        <begin position="499"/>
        <end position="509"/>
    </location>
</feature>
<feature type="sequence conflict" description="In Ref. 5; EEE56554." evidence="8" ref="5">
    <original>Q</original>
    <variation>E</variation>
    <location>
        <position position="69"/>
    </location>
</feature>
<protein>
    <recommendedName>
        <fullName evidence="6">Histone deacetylase 2</fullName>
        <shortName evidence="6">OsHDAC2</shortName>
        <ecNumber evidence="1">3.5.1.98</ecNumber>
    </recommendedName>
</protein>
<dbReference type="EC" id="3.5.1.98" evidence="1"/>
<dbReference type="EMBL" id="AF513383">
    <property type="protein sequence ID" value="AAP47172.1"/>
    <property type="molecule type" value="mRNA"/>
</dbReference>
<dbReference type="EMBL" id="AP005846">
    <property type="protein sequence ID" value="BAD17681.1"/>
    <property type="molecule type" value="Genomic_DNA"/>
</dbReference>
<dbReference type="EMBL" id="AP004039">
    <property type="protein sequence ID" value="BAD25051.1"/>
    <property type="molecule type" value="Genomic_DNA"/>
</dbReference>
<dbReference type="EMBL" id="AP008208">
    <property type="protein sequence ID" value="BAF08201.1"/>
    <property type="status" value="ALT_SEQ"/>
    <property type="molecule type" value="Genomic_DNA"/>
</dbReference>
<dbReference type="EMBL" id="AP014958">
    <property type="protein sequence ID" value="BAS77631.1"/>
    <property type="molecule type" value="Genomic_DNA"/>
</dbReference>
<dbReference type="EMBL" id="AP014958">
    <property type="protein sequence ID" value="BAS77632.1"/>
    <property type="molecule type" value="Genomic_DNA"/>
</dbReference>
<dbReference type="EMBL" id="CM000139">
    <property type="protein sequence ID" value="EEE56554.1"/>
    <property type="molecule type" value="Genomic_DNA"/>
</dbReference>
<dbReference type="EMBL" id="AK103097">
    <property type="protein sequence ID" value="BAG95887.1"/>
    <property type="molecule type" value="mRNA"/>
</dbReference>
<dbReference type="RefSeq" id="XP_015627743.1">
    <molecule id="Q6YV04-1"/>
    <property type="nucleotide sequence ID" value="XM_015772257.1"/>
</dbReference>
<dbReference type="SMR" id="Q6YV04"/>
<dbReference type="FunCoup" id="Q6YV04">
    <property type="interactions" value="2562"/>
</dbReference>
<dbReference type="STRING" id="39947.Q6YV04"/>
<dbReference type="PaxDb" id="39947-Q6YV04"/>
<dbReference type="EnsemblPlants" id="Os02t0215200-02">
    <molecule id="Q6YV04-1"/>
    <property type="protein sequence ID" value="Os02t0215200-02"/>
    <property type="gene ID" value="Os02g0215200"/>
</dbReference>
<dbReference type="GeneID" id="4328720"/>
<dbReference type="Gramene" id="Os02t0215200-02">
    <molecule id="Q6YV04-1"/>
    <property type="protein sequence ID" value="Os02t0215200-02"/>
    <property type="gene ID" value="Os02g0215200"/>
</dbReference>
<dbReference type="KEGG" id="dosa:Os02g0215200"/>
<dbReference type="KEGG" id="osa:4328720"/>
<dbReference type="eggNOG" id="KOG1342">
    <property type="taxonomic scope" value="Eukaryota"/>
</dbReference>
<dbReference type="InParanoid" id="Q6YV04"/>
<dbReference type="OMA" id="XYHQRVL"/>
<dbReference type="OrthoDB" id="1918432at2759"/>
<dbReference type="BRENDA" id="3.5.1.98">
    <property type="organism ID" value="8948"/>
</dbReference>
<dbReference type="PlantReactome" id="R-OSA-6787011">
    <property type="pathway name" value="Jasmonic acid signaling"/>
</dbReference>
<dbReference type="Proteomes" id="UP000000763">
    <property type="component" value="Chromosome 2"/>
</dbReference>
<dbReference type="Proteomes" id="UP000007752">
    <property type="component" value="Chromosome 2"/>
</dbReference>
<dbReference type="Proteomes" id="UP000059680">
    <property type="component" value="Chromosome 2"/>
</dbReference>
<dbReference type="ExpressionAtlas" id="Q6YV04">
    <property type="expression patterns" value="baseline and differential"/>
</dbReference>
<dbReference type="GO" id="GO:0005634">
    <property type="term" value="C:nucleus"/>
    <property type="evidence" value="ECO:0000318"/>
    <property type="project" value="GO_Central"/>
</dbReference>
<dbReference type="GO" id="GO:0004407">
    <property type="term" value="F:histone deacetylase activity"/>
    <property type="evidence" value="ECO:0000318"/>
    <property type="project" value="GO_Central"/>
</dbReference>
<dbReference type="GO" id="GO:0141221">
    <property type="term" value="F:histone deacetylase activity, hydrolytic mechanism"/>
    <property type="evidence" value="ECO:0007669"/>
    <property type="project" value="UniProtKB-EC"/>
</dbReference>
<dbReference type="GO" id="GO:0008270">
    <property type="term" value="F:zinc ion binding"/>
    <property type="evidence" value="ECO:0000250"/>
    <property type="project" value="UniProtKB"/>
</dbReference>
<dbReference type="GO" id="GO:0040029">
    <property type="term" value="P:epigenetic regulation of gene expression"/>
    <property type="evidence" value="ECO:0000318"/>
    <property type="project" value="GO_Central"/>
</dbReference>
<dbReference type="FunFam" id="3.40.800.20:FF:000001">
    <property type="entry name" value="Histone deacetylase"/>
    <property type="match status" value="1"/>
</dbReference>
<dbReference type="Gene3D" id="3.40.800.20">
    <property type="entry name" value="Histone deacetylase domain"/>
    <property type="match status" value="1"/>
</dbReference>
<dbReference type="InterPro" id="IPR050284">
    <property type="entry name" value="HDAC_PDAC"/>
</dbReference>
<dbReference type="InterPro" id="IPR000286">
    <property type="entry name" value="His_deacetylse"/>
</dbReference>
<dbReference type="InterPro" id="IPR003084">
    <property type="entry name" value="His_deacetylse_1"/>
</dbReference>
<dbReference type="InterPro" id="IPR023801">
    <property type="entry name" value="His_deacetylse_dom"/>
</dbReference>
<dbReference type="InterPro" id="IPR037138">
    <property type="entry name" value="His_deacetylse_dom_sf"/>
</dbReference>
<dbReference type="InterPro" id="IPR023696">
    <property type="entry name" value="Ureohydrolase_dom_sf"/>
</dbReference>
<dbReference type="PANTHER" id="PTHR10625:SF22">
    <property type="entry name" value="HISTONE DEACETYLASE 2"/>
    <property type="match status" value="1"/>
</dbReference>
<dbReference type="PANTHER" id="PTHR10625">
    <property type="entry name" value="HISTONE DEACETYLASE HDAC1-RELATED"/>
    <property type="match status" value="1"/>
</dbReference>
<dbReference type="Pfam" id="PF00850">
    <property type="entry name" value="Hist_deacetyl"/>
    <property type="match status" value="1"/>
</dbReference>
<dbReference type="PIRSF" id="PIRSF037913">
    <property type="entry name" value="His_deacetylse_1"/>
    <property type="match status" value="1"/>
</dbReference>
<dbReference type="PRINTS" id="PR01270">
    <property type="entry name" value="HDASUPER"/>
</dbReference>
<dbReference type="PRINTS" id="PR01271">
    <property type="entry name" value="HISDACETLASE"/>
</dbReference>
<dbReference type="SUPFAM" id="SSF52768">
    <property type="entry name" value="Arginase/deacetylase"/>
    <property type="match status" value="1"/>
</dbReference>
<proteinExistence type="evidence at transcript level"/>
<comment type="function">
    <text evidence="1">Responsible for the deacetylation of lysine residues on the N-terminal part of the core histones (H2A, H2B, H3 and H4). Histone deacetylation gives a tag for epigenetic repression and plays an important role in transcriptional regulation, cell cycle progression and developmental events. Histone deacetylases act via the formation of large multiprotein complexes.</text>
</comment>
<comment type="catalytic activity">
    <reaction evidence="1">
        <text>N(6)-acetyl-L-lysyl-[histone] + H2O = L-lysyl-[histone] + acetate</text>
        <dbReference type="Rhea" id="RHEA:58196"/>
        <dbReference type="Rhea" id="RHEA-COMP:9845"/>
        <dbReference type="Rhea" id="RHEA-COMP:11338"/>
        <dbReference type="ChEBI" id="CHEBI:15377"/>
        <dbReference type="ChEBI" id="CHEBI:29969"/>
        <dbReference type="ChEBI" id="CHEBI:30089"/>
        <dbReference type="ChEBI" id="CHEBI:61930"/>
        <dbReference type="EC" id="3.5.1.98"/>
    </reaction>
</comment>
<comment type="cofactor">
    <cofactor evidence="2">
        <name>Zn(2+)</name>
        <dbReference type="ChEBI" id="CHEBI:29105"/>
    </cofactor>
    <text evidence="2">Binds 1 zinc ion per subunit.</text>
</comment>
<comment type="subcellular location">
    <subcellularLocation>
        <location evidence="1">Nucleus</location>
    </subcellularLocation>
</comment>
<comment type="alternative products">
    <event type="alternative splicing"/>
    <isoform>
        <id>Q6YV04-1</id>
        <name>1</name>
        <sequence type="displayed"/>
    </isoform>
    <isoform>
        <id>Q6YV04-2</id>
        <name>2</name>
        <sequence type="described" ref="VSP_058972 VSP_058973"/>
    </isoform>
</comment>
<comment type="tissue specificity">
    <text evidence="4">Expressed in roots.</text>
</comment>
<comment type="induction">
    <text evidence="5">Induced by drought and salt stresses.</text>
</comment>
<comment type="miscellaneous">
    <text evidence="5">Plants silencing HDAC3 exhibit semi-dwarf phenotype.</text>
</comment>
<comment type="similarity">
    <text evidence="8">Belongs to the histone deacetylase family. HD Type 1 subfamily.</text>
</comment>
<comment type="sequence caution" evidence="8">
    <conflict type="erroneous gene model prediction">
        <sequence resource="EMBL-CDS" id="BAF08201"/>
    </conflict>
</comment>
<name>HDAC2_ORYSJ</name>
<gene>
    <name evidence="6" type="primary">HDAC2</name>
    <name evidence="7" type="synonym">HDA710</name>
    <name evidence="11" type="ordered locus">Os02g0215200</name>
    <name evidence="8" type="ordered locus">LOC_Os02g12380</name>
    <name evidence="9" type="ORF">B1307A11.3-1</name>
    <name evidence="10" type="ORF">OJ1006_D05.31-1</name>
    <name evidence="12" type="ORF">OsJ_05884</name>
</gene>